<protein>
    <recommendedName>
        <fullName>Protein ninG</fullName>
    </recommendedName>
</protein>
<comment type="similarity">
    <text evidence="2">Belongs to the ninG family.</text>
</comment>
<feature type="chain" id="PRO_0000077629" description="Protein ninG">
    <location>
        <begin position="1"/>
        <end position="201"/>
    </location>
</feature>
<feature type="region of interest" description="Disordered" evidence="1">
    <location>
        <begin position="36"/>
        <end position="64"/>
    </location>
</feature>
<accession>P69174</accession>
<accession>Q9ZWX1</accession>
<organism>
    <name type="scientific">Escherichia phage 933W</name>
    <name type="common">Bacteriophage 933W</name>
    <dbReference type="NCBI Taxonomy" id="10730"/>
    <lineage>
        <taxon>Viruses</taxon>
        <taxon>Duplodnaviria</taxon>
        <taxon>Heunggongvirae</taxon>
        <taxon>Uroviricota</taxon>
        <taxon>Caudoviricetes</taxon>
        <taxon>Sepvirinae</taxon>
        <taxon>Traversvirus</taxon>
        <taxon>Traversvirus tv933W</taxon>
    </lineage>
</organism>
<keyword id="KW-1185">Reference proteome</keyword>
<evidence type="ECO:0000256" key="1">
    <source>
        <dbReference type="SAM" id="MobiDB-lite"/>
    </source>
</evidence>
<evidence type="ECO:0000305" key="2"/>
<sequence>MAKPARRKCKICKEWFHPAFSNQWWCCPEHGTQLALERRSKEREKAEKAAEKKRRREEQKQKDKLKIRKLALKPRSYWIKQAQQAVNAFIRERDRDLPCISCGTLTSAQWDAGHYRTTAAAPQLRFDERNIHKQCVVCNQHKSGNLVPYRVELINRIGQEAVDEIESNHNRHRWTVEECRAIKAKYQQKLKDLRNSRSEAA</sequence>
<proteinExistence type="inferred from homology"/>
<organismHost>
    <name type="scientific">Escherichia coli O157:H7</name>
    <dbReference type="NCBI Taxonomy" id="83334"/>
</organismHost>
<gene>
    <name type="primary">ninG</name>
    <name type="ordered locus">L0097</name>
</gene>
<dbReference type="EMBL" id="Y10775">
    <property type="protein sequence ID" value="CAB39297.1"/>
    <property type="molecule type" value="Genomic_DNA"/>
</dbReference>
<dbReference type="EMBL" id="AF125520">
    <property type="protein sequence ID" value="AAD25442.1"/>
    <property type="molecule type" value="Genomic_DNA"/>
</dbReference>
<dbReference type="RefSeq" id="NP_049497.1">
    <property type="nucleotide sequence ID" value="NC_000924.1"/>
</dbReference>
<dbReference type="SMR" id="P69174"/>
<dbReference type="GeneID" id="1261942"/>
<dbReference type="KEGG" id="vg:1261942"/>
<dbReference type="OrthoDB" id="10888at10239"/>
<dbReference type="Proteomes" id="UP000002135">
    <property type="component" value="Genome"/>
</dbReference>
<dbReference type="InterPro" id="IPR008713">
    <property type="entry name" value="Phage_lambda_NinG"/>
</dbReference>
<dbReference type="Pfam" id="PF05766">
    <property type="entry name" value="NinG"/>
    <property type="match status" value="1"/>
</dbReference>
<name>NING_BP933</name>
<reference key="1">
    <citation type="journal article" date="1999" name="Mol. Gen. Genet.">
        <title>Shiga toxins even when different are encoded at identical positions in the genomes of related temperate bacteriophages.</title>
        <authorList>
            <person name="Karch H."/>
            <person name="Schmidt H."/>
            <person name="Janetzki-Mittmann C."/>
            <person name="Scheef J."/>
            <person name="Kroeger M."/>
        </authorList>
    </citation>
    <scope>NUCLEOTIDE SEQUENCE [GENOMIC DNA]</scope>
</reference>
<reference key="2">
    <citation type="journal article" date="1999" name="J. Bacteriol.">
        <title>Sequence of Shiga toxin 2 phage 933W from Escherichia coli O157:H7: Shiga toxin as a phage late-gene product.</title>
        <authorList>
            <person name="Plunkett G. III"/>
            <person name="Rose D.J."/>
            <person name="Durfee T.J."/>
            <person name="Blattner F.R."/>
        </authorList>
    </citation>
    <scope>NUCLEOTIDE SEQUENCE [LARGE SCALE GENOMIC DNA]</scope>
</reference>